<dbReference type="EMBL" id="BC081176">
    <property type="protein sequence ID" value="AAH81176.1"/>
    <property type="molecule type" value="mRNA"/>
</dbReference>
<dbReference type="RefSeq" id="NP_001087756.1">
    <property type="nucleotide sequence ID" value="NM_001094287.1"/>
</dbReference>
<dbReference type="SMR" id="Q66IV3"/>
<dbReference type="DNASU" id="447580"/>
<dbReference type="GeneID" id="447580"/>
<dbReference type="KEGG" id="xla:447580"/>
<dbReference type="AGR" id="Xenbase:XB-GENE-6033793"/>
<dbReference type="CTD" id="447580"/>
<dbReference type="Xenbase" id="XB-GENE-6033793">
    <property type="gene designation" value="lhfpl3.L"/>
</dbReference>
<dbReference type="OrthoDB" id="5873721at2759"/>
<dbReference type="Proteomes" id="UP000186698">
    <property type="component" value="Chromosome 3L"/>
</dbReference>
<dbReference type="Bgee" id="447580">
    <property type="expression patterns" value="Expressed in brain and 5 other cell types or tissues"/>
</dbReference>
<dbReference type="GO" id="GO:0005886">
    <property type="term" value="C:plasma membrane"/>
    <property type="evidence" value="ECO:0000318"/>
    <property type="project" value="GO_Central"/>
</dbReference>
<dbReference type="GO" id="GO:0007605">
    <property type="term" value="P:sensory perception of sound"/>
    <property type="evidence" value="ECO:0000318"/>
    <property type="project" value="GO_Central"/>
</dbReference>
<dbReference type="InterPro" id="IPR019372">
    <property type="entry name" value="LHFPL"/>
</dbReference>
<dbReference type="PANTHER" id="PTHR12489:SF13">
    <property type="entry name" value="LHFPL TETRASPAN SUBFAMILY MEMBER 3 PROTEIN"/>
    <property type="match status" value="1"/>
</dbReference>
<dbReference type="PANTHER" id="PTHR12489">
    <property type="entry name" value="LIPOMA HMGIC FUSION PARTNER-LIKE PROTEIN"/>
    <property type="match status" value="1"/>
</dbReference>
<dbReference type="Pfam" id="PF10242">
    <property type="entry name" value="L_HMGIC_fpl"/>
    <property type="match status" value="1"/>
</dbReference>
<proteinExistence type="evidence at transcript level"/>
<accession>Q66IV3</accession>
<organism>
    <name type="scientific">Xenopus laevis</name>
    <name type="common">African clawed frog</name>
    <dbReference type="NCBI Taxonomy" id="8355"/>
    <lineage>
        <taxon>Eukaryota</taxon>
        <taxon>Metazoa</taxon>
        <taxon>Chordata</taxon>
        <taxon>Craniata</taxon>
        <taxon>Vertebrata</taxon>
        <taxon>Euteleostomi</taxon>
        <taxon>Amphibia</taxon>
        <taxon>Batrachia</taxon>
        <taxon>Anura</taxon>
        <taxon>Pipoidea</taxon>
        <taxon>Pipidae</taxon>
        <taxon>Xenopodinae</taxon>
        <taxon>Xenopus</taxon>
        <taxon>Xenopus</taxon>
    </lineage>
</organism>
<feature type="chain" id="PRO_0000244769" description="LHFPL tetraspan subfamily member 3 protein">
    <location>
        <begin position="1"/>
        <end position="218"/>
    </location>
</feature>
<feature type="transmembrane region" description="Helical" evidence="2">
    <location>
        <begin position="22"/>
        <end position="42"/>
    </location>
</feature>
<feature type="transmembrane region" description="Helical" evidence="2">
    <location>
        <begin position="96"/>
        <end position="116"/>
    </location>
</feature>
<feature type="transmembrane region" description="Helical" evidence="2">
    <location>
        <begin position="126"/>
        <end position="146"/>
    </location>
</feature>
<feature type="transmembrane region" description="Helical" evidence="2">
    <location>
        <begin position="177"/>
        <end position="197"/>
    </location>
</feature>
<name>LHPL3_XENLA</name>
<reference key="1">
    <citation type="submission" date="2004-08" db="EMBL/GenBank/DDBJ databases">
        <authorList>
            <consortium name="NIH - Xenopus Gene Collection (XGC) project"/>
        </authorList>
    </citation>
    <scope>NUCLEOTIDE SEQUENCE [LARGE SCALE MRNA]</scope>
    <source>
        <tissue>Eye</tissue>
    </source>
</reference>
<protein>
    <recommendedName>
        <fullName evidence="1">LHFPL tetraspan subfamily member 3 protein</fullName>
    </recommendedName>
    <alternativeName>
        <fullName evidence="1">Lipoma HMGIC fusion partner-like 3 protein</fullName>
    </alternativeName>
</protein>
<keyword id="KW-0472">Membrane</keyword>
<keyword id="KW-1185">Reference proteome</keyword>
<keyword id="KW-0812">Transmembrane</keyword>
<keyword id="KW-1133">Transmembrane helix</keyword>
<evidence type="ECO:0000250" key="1">
    <source>
        <dbReference type="UniProtKB" id="Q86UP9"/>
    </source>
</evidence>
<evidence type="ECO:0000255" key="2"/>
<evidence type="ECO:0000305" key="3"/>
<comment type="subcellular location">
    <subcellularLocation>
        <location evidence="3">Membrane</location>
        <topology evidence="3">Multi-pass membrane protein</topology>
    </subcellularLocation>
</comment>
<comment type="similarity">
    <text evidence="3">Belongs to the LHFP family.</text>
</comment>
<gene>
    <name evidence="1" type="primary">lhfpl3</name>
</gene>
<sequence length="218" mass="23783">MLSPQEAAKIYHANYIRNSGAIGVLWAIFTICFAIVNIVCFIQPYWIGDGVDTPQAGYFGLFHFCIGSGFSKELTCTGSFTEFSSIPSGAFKAASFFIGLSMTLIIGCIVSFGLFFFCNTATVYKICAWMQLCSAACLVLGCMIFPDGWDADEVKRMCGEKTDKYSLGACSVRWAYILAIIGILDALILSFLAFVLGNRLDSLMAEQLKLESKDDGNA</sequence>